<sequence>MPQTLFFVTSNASKLAEVSAILAASGISVQSMALDLPELQGSIEDISKDKAKRAAEAIGGPVLVEDTCLCFNALKGLPGPYIKWFMKDLGHEGLVNMLAAYEDKSAQAVCTFAHCEGPGKEPVLFQGRTDGKIVPPRGPAKFGWDPIFEYEGQTYAEMDKAAKNLISHRFKALEMLKEWMEAHP</sequence>
<organism>
    <name type="scientific">Tuber melanosporum (strain Mel28)</name>
    <name type="common">Perigord black truffle</name>
    <dbReference type="NCBI Taxonomy" id="656061"/>
    <lineage>
        <taxon>Eukaryota</taxon>
        <taxon>Fungi</taxon>
        <taxon>Dikarya</taxon>
        <taxon>Ascomycota</taxon>
        <taxon>Pezizomycotina</taxon>
        <taxon>Pezizomycetes</taxon>
        <taxon>Pezizales</taxon>
        <taxon>Tuberaceae</taxon>
        <taxon>Tuber</taxon>
    </lineage>
</organism>
<proteinExistence type="inferred from homology"/>
<protein>
    <recommendedName>
        <fullName evidence="1">Inosine triphosphate pyrophosphatase</fullName>
        <shortName evidence="1">ITPase</shortName>
        <shortName evidence="1">Inosine triphosphatase</shortName>
        <ecNumber evidence="1">3.6.1.66</ecNumber>
    </recommendedName>
    <alternativeName>
        <fullName evidence="1">Non-canonical purine NTP pyrophosphatase</fullName>
    </alternativeName>
    <alternativeName>
        <fullName evidence="1">Non-standard purine NTP pyrophosphatase</fullName>
    </alternativeName>
    <alternativeName>
        <fullName evidence="1">Nucleoside-triphosphate diphosphatase</fullName>
    </alternativeName>
    <alternativeName>
        <fullName evidence="1">Nucleoside-triphosphate pyrophosphatase</fullName>
        <shortName evidence="1">NTPase</shortName>
    </alternativeName>
    <alternativeName>
        <fullName evidence="1">XTP/dITP diphosphatase</fullName>
    </alternativeName>
</protein>
<feature type="chain" id="PRO_0000413150" description="Inosine triphosphate pyrophosphatase">
    <location>
        <begin position="1"/>
        <end position="184"/>
    </location>
</feature>
<feature type="binding site" evidence="1">
    <location>
        <begin position="9"/>
        <end position="14"/>
    </location>
    <ligand>
        <name>ITP</name>
        <dbReference type="ChEBI" id="CHEBI:61402"/>
    </ligand>
</feature>
<feature type="binding site" evidence="1">
    <location>
        <position position="38"/>
    </location>
    <ligand>
        <name>Mg(2+)</name>
        <dbReference type="ChEBI" id="CHEBI:18420"/>
    </ligand>
</feature>
<feature type="binding site" evidence="1">
    <location>
        <position position="50"/>
    </location>
    <ligand>
        <name>ITP</name>
        <dbReference type="ChEBI" id="CHEBI:61402"/>
    </ligand>
</feature>
<feature type="binding site" evidence="1">
    <location>
        <begin position="66"/>
        <end position="67"/>
    </location>
    <ligand>
        <name>ITP</name>
        <dbReference type="ChEBI" id="CHEBI:61402"/>
    </ligand>
</feature>
<feature type="binding site" evidence="1">
    <location>
        <position position="83"/>
    </location>
    <ligand>
        <name>ITP</name>
        <dbReference type="ChEBI" id="CHEBI:61402"/>
    </ligand>
</feature>
<feature type="binding site" evidence="1">
    <location>
        <begin position="142"/>
        <end position="145"/>
    </location>
    <ligand>
        <name>ITP</name>
        <dbReference type="ChEBI" id="CHEBI:61402"/>
    </ligand>
</feature>
<feature type="binding site" evidence="1">
    <location>
        <position position="163"/>
    </location>
    <ligand>
        <name>ITP</name>
        <dbReference type="ChEBI" id="CHEBI:61402"/>
    </ligand>
</feature>
<feature type="binding site" evidence="1">
    <location>
        <begin position="168"/>
        <end position="169"/>
    </location>
    <ligand>
        <name>ITP</name>
        <dbReference type="ChEBI" id="CHEBI:61402"/>
    </ligand>
</feature>
<keyword id="KW-0963">Cytoplasm</keyword>
<keyword id="KW-0378">Hydrolase</keyword>
<keyword id="KW-0460">Magnesium</keyword>
<keyword id="KW-0464">Manganese</keyword>
<keyword id="KW-0479">Metal-binding</keyword>
<keyword id="KW-0546">Nucleotide metabolism</keyword>
<keyword id="KW-0547">Nucleotide-binding</keyword>
<keyword id="KW-0539">Nucleus</keyword>
<keyword id="KW-1185">Reference proteome</keyword>
<comment type="function">
    <text evidence="1">Pyrophosphatase that hydrolyzes non-canonical purine nucleotides such as inosine triphosphate (ITP), deoxyinosine triphosphate (dITP) or xanthosine 5'-triphosphate (XTP) to their respective monophosphate derivatives. The enzyme does not distinguish between the deoxy- and ribose forms. Probably excludes non-canonical purines from RNA and DNA precursor pools, thus preventing their incorporation into RNA and DNA and avoiding chromosomal lesions.</text>
</comment>
<comment type="catalytic activity">
    <reaction evidence="1">
        <text>ITP + H2O = IMP + diphosphate + H(+)</text>
        <dbReference type="Rhea" id="RHEA:29399"/>
        <dbReference type="ChEBI" id="CHEBI:15377"/>
        <dbReference type="ChEBI" id="CHEBI:15378"/>
        <dbReference type="ChEBI" id="CHEBI:33019"/>
        <dbReference type="ChEBI" id="CHEBI:58053"/>
        <dbReference type="ChEBI" id="CHEBI:61402"/>
        <dbReference type="EC" id="3.6.1.66"/>
    </reaction>
    <physiologicalReaction direction="left-to-right" evidence="1">
        <dbReference type="Rhea" id="RHEA:29400"/>
    </physiologicalReaction>
</comment>
<comment type="catalytic activity">
    <reaction evidence="1">
        <text>dITP + H2O = dIMP + diphosphate + H(+)</text>
        <dbReference type="Rhea" id="RHEA:28342"/>
        <dbReference type="ChEBI" id="CHEBI:15377"/>
        <dbReference type="ChEBI" id="CHEBI:15378"/>
        <dbReference type="ChEBI" id="CHEBI:33019"/>
        <dbReference type="ChEBI" id="CHEBI:61194"/>
        <dbReference type="ChEBI" id="CHEBI:61382"/>
        <dbReference type="EC" id="3.6.1.66"/>
    </reaction>
    <physiologicalReaction direction="left-to-right" evidence="1">
        <dbReference type="Rhea" id="RHEA:28343"/>
    </physiologicalReaction>
</comment>
<comment type="catalytic activity">
    <reaction evidence="1">
        <text>XTP + H2O = XMP + diphosphate + H(+)</text>
        <dbReference type="Rhea" id="RHEA:28610"/>
        <dbReference type="ChEBI" id="CHEBI:15377"/>
        <dbReference type="ChEBI" id="CHEBI:15378"/>
        <dbReference type="ChEBI" id="CHEBI:33019"/>
        <dbReference type="ChEBI" id="CHEBI:57464"/>
        <dbReference type="ChEBI" id="CHEBI:61314"/>
        <dbReference type="EC" id="3.6.1.66"/>
    </reaction>
    <physiologicalReaction direction="left-to-right" evidence="1">
        <dbReference type="Rhea" id="RHEA:28611"/>
    </physiologicalReaction>
</comment>
<comment type="cofactor">
    <cofactor evidence="1">
        <name>Mg(2+)</name>
        <dbReference type="ChEBI" id="CHEBI:18420"/>
    </cofactor>
    <cofactor evidence="1">
        <name>Mn(2+)</name>
        <dbReference type="ChEBI" id="CHEBI:29035"/>
    </cofactor>
    <text evidence="1">Binds 1 divalent metal cation per subunit; can use either Mg(2+) or Mn(2+).</text>
</comment>
<comment type="subunit">
    <text evidence="1">Homodimer.</text>
</comment>
<comment type="subcellular location">
    <subcellularLocation>
        <location evidence="1">Cytoplasm</location>
    </subcellularLocation>
    <subcellularLocation>
        <location evidence="1">Nucleus</location>
    </subcellularLocation>
</comment>
<comment type="similarity">
    <text evidence="1">Belongs to the HAM1 NTPase family.</text>
</comment>
<reference key="1">
    <citation type="journal article" date="2010" name="Nature">
        <title>Perigord black truffle genome uncovers evolutionary origins and mechanisms of symbiosis.</title>
        <authorList>
            <person name="Martin F."/>
            <person name="Kohler A."/>
            <person name="Murat C."/>
            <person name="Balestrini R."/>
            <person name="Coutinho P.M."/>
            <person name="Jaillon O."/>
            <person name="Montanini B."/>
            <person name="Morin E."/>
            <person name="Noel B."/>
            <person name="Percudani R."/>
            <person name="Porcel B."/>
            <person name="Rubini A."/>
            <person name="Amicucci A."/>
            <person name="Amselem J."/>
            <person name="Anthouard V."/>
            <person name="Arcioni S."/>
            <person name="Artiguenave F."/>
            <person name="Aury J.M."/>
            <person name="Ballario P."/>
            <person name="Bolchi A."/>
            <person name="Brenna A."/>
            <person name="Brun A."/>
            <person name="Buee M."/>
            <person name="Cantarel B."/>
            <person name="Chevalier G."/>
            <person name="Couloux A."/>
            <person name="Da Silva C."/>
            <person name="Denoeud F."/>
            <person name="Duplessis S."/>
            <person name="Ghignone S."/>
            <person name="Hilselberger B."/>
            <person name="Iotti M."/>
            <person name="Marcais B."/>
            <person name="Mello A."/>
            <person name="Miranda M."/>
            <person name="Pacioni G."/>
            <person name="Quesneville H."/>
            <person name="Riccioni C."/>
            <person name="Ruotolo R."/>
            <person name="Splivallo R."/>
            <person name="Stocchi V."/>
            <person name="Tisserant E."/>
            <person name="Viscomi A.R."/>
            <person name="Zambonelli A."/>
            <person name="Zampieri E."/>
            <person name="Henrissat B."/>
            <person name="Lebrun M.H."/>
            <person name="Paolocci F."/>
            <person name="Bonfante P."/>
            <person name="Ottonello S."/>
            <person name="Wincker P."/>
        </authorList>
    </citation>
    <scope>NUCLEOTIDE SEQUENCE [LARGE SCALE GENOMIC DNA]</scope>
    <source>
        <strain>Mel28</strain>
    </source>
</reference>
<dbReference type="EC" id="3.6.1.66" evidence="1"/>
<dbReference type="EMBL" id="FN430109">
    <property type="protein sequence ID" value="CAZ82231.1"/>
    <property type="molecule type" value="Genomic_DNA"/>
</dbReference>
<dbReference type="RefSeq" id="XP_002838040.1">
    <property type="nucleotide sequence ID" value="XM_002837994.1"/>
</dbReference>
<dbReference type="SMR" id="D5GCI8"/>
<dbReference type="FunCoup" id="D5GCI8">
    <property type="interactions" value="694"/>
</dbReference>
<dbReference type="STRING" id="656061.D5GCI8"/>
<dbReference type="EnsemblFungi" id="CAZ82231">
    <property type="protein sequence ID" value="CAZ82231"/>
    <property type="gene ID" value="GSTUM_00005907001"/>
</dbReference>
<dbReference type="GeneID" id="9186413"/>
<dbReference type="KEGG" id="tml:GSTUM_00005907001"/>
<dbReference type="eggNOG" id="KOG3222">
    <property type="taxonomic scope" value="Eukaryota"/>
</dbReference>
<dbReference type="HOGENOM" id="CLU_082080_1_1_1"/>
<dbReference type="InParanoid" id="D5GCI8"/>
<dbReference type="OMA" id="YDPIFQP"/>
<dbReference type="Proteomes" id="UP000006911">
    <property type="component" value="Unassembled WGS sequence"/>
</dbReference>
<dbReference type="GO" id="GO:0005737">
    <property type="term" value="C:cytoplasm"/>
    <property type="evidence" value="ECO:0007669"/>
    <property type="project" value="UniProtKB-SubCell"/>
</dbReference>
<dbReference type="GO" id="GO:0005634">
    <property type="term" value="C:nucleus"/>
    <property type="evidence" value="ECO:0007669"/>
    <property type="project" value="UniProtKB-SubCell"/>
</dbReference>
<dbReference type="GO" id="GO:0035870">
    <property type="term" value="F:dITP diphosphatase activity"/>
    <property type="evidence" value="ECO:0007669"/>
    <property type="project" value="RHEA"/>
</dbReference>
<dbReference type="GO" id="GO:0036220">
    <property type="term" value="F:ITP diphosphatase activity"/>
    <property type="evidence" value="ECO:0007669"/>
    <property type="project" value="RHEA"/>
</dbReference>
<dbReference type="GO" id="GO:0046872">
    <property type="term" value="F:metal ion binding"/>
    <property type="evidence" value="ECO:0007669"/>
    <property type="project" value="UniProtKB-KW"/>
</dbReference>
<dbReference type="GO" id="GO:0000166">
    <property type="term" value="F:nucleotide binding"/>
    <property type="evidence" value="ECO:0007669"/>
    <property type="project" value="UniProtKB-KW"/>
</dbReference>
<dbReference type="GO" id="GO:0036222">
    <property type="term" value="F:XTP diphosphatase activity"/>
    <property type="evidence" value="ECO:0007669"/>
    <property type="project" value="RHEA"/>
</dbReference>
<dbReference type="GO" id="GO:0009204">
    <property type="term" value="P:deoxyribonucleoside triphosphate catabolic process"/>
    <property type="evidence" value="ECO:0007669"/>
    <property type="project" value="UniProtKB-UniRule"/>
</dbReference>
<dbReference type="GO" id="GO:0009117">
    <property type="term" value="P:nucleotide metabolic process"/>
    <property type="evidence" value="ECO:0007669"/>
    <property type="project" value="UniProtKB-KW"/>
</dbReference>
<dbReference type="CDD" id="cd00515">
    <property type="entry name" value="HAM1"/>
    <property type="match status" value="1"/>
</dbReference>
<dbReference type="FunFam" id="3.90.950.10:FF:000003">
    <property type="entry name" value="Inosine triphosphate pyrophosphatase"/>
    <property type="match status" value="1"/>
</dbReference>
<dbReference type="Gene3D" id="3.90.950.10">
    <property type="match status" value="1"/>
</dbReference>
<dbReference type="HAMAP" id="MF_03148">
    <property type="entry name" value="HAM1_NTPase"/>
    <property type="match status" value="1"/>
</dbReference>
<dbReference type="InterPro" id="IPR027502">
    <property type="entry name" value="ITPase"/>
</dbReference>
<dbReference type="InterPro" id="IPR029001">
    <property type="entry name" value="ITPase-like_fam"/>
</dbReference>
<dbReference type="InterPro" id="IPR002637">
    <property type="entry name" value="RdgB/HAM1"/>
</dbReference>
<dbReference type="NCBIfam" id="TIGR00042">
    <property type="entry name" value="RdgB/HAM1 family non-canonical purine NTP pyrophosphatase"/>
    <property type="match status" value="1"/>
</dbReference>
<dbReference type="PANTHER" id="PTHR11067:SF9">
    <property type="entry name" value="INOSINE TRIPHOSPHATE PYROPHOSPHATASE"/>
    <property type="match status" value="1"/>
</dbReference>
<dbReference type="PANTHER" id="PTHR11067">
    <property type="entry name" value="INOSINE TRIPHOSPHATE PYROPHOSPHATASE/HAM1 PROTEIN"/>
    <property type="match status" value="1"/>
</dbReference>
<dbReference type="Pfam" id="PF01725">
    <property type="entry name" value="Ham1p_like"/>
    <property type="match status" value="1"/>
</dbReference>
<dbReference type="SUPFAM" id="SSF52972">
    <property type="entry name" value="ITPase-like"/>
    <property type="match status" value="1"/>
</dbReference>
<evidence type="ECO:0000255" key="1">
    <source>
        <dbReference type="HAMAP-Rule" id="MF_03148"/>
    </source>
</evidence>
<name>ITPA_TUBMM</name>
<gene>
    <name type="ORF">GSTUM_00005907001</name>
</gene>
<accession>D5GCI8</accession>